<reference key="1">
    <citation type="submission" date="2006-11" db="EMBL/GenBank/DDBJ databases">
        <authorList>
            <consortium name="NIH - Xenopus Gene Collection (XGC) project"/>
        </authorList>
    </citation>
    <scope>NUCLEOTIDE SEQUENCE [LARGE SCALE MRNA]</scope>
    <source>
        <tissue>Testis</tissue>
    </source>
</reference>
<proteinExistence type="evidence at transcript level"/>
<comment type="function">
    <text evidence="1">Inhibits programmed -1 ribosomal frameshifting (-1PRF) of a variety of mRNAs from viruses and cellular genes. Interacts with the -1PRF signal of target mRNA and translating ribosomes and causes premature translation termination at the frameshifting site. May exhibit antiviral activity.</text>
</comment>
<comment type="subcellular location">
    <subcellularLocation>
        <location evidence="1">Cytoplasm</location>
    </subcellularLocation>
    <subcellularLocation>
        <location evidence="1">Nucleus</location>
    </subcellularLocation>
    <subcellularLocation>
        <location evidence="1">Cytoplasm</location>
        <location evidence="1">P-body</location>
    </subcellularLocation>
    <text evidence="1">Predominantly found in t for dsDNA.</text>
</comment>
<comment type="similarity">
    <text evidence="2">Belongs to the SHFL family.</text>
</comment>
<dbReference type="EMBL" id="BC127301">
    <property type="protein sequence ID" value="AAI27302.1"/>
    <property type="molecule type" value="mRNA"/>
</dbReference>
<dbReference type="RefSeq" id="NP_001090662.1">
    <property type="nucleotide sequence ID" value="NM_001097193.1"/>
</dbReference>
<dbReference type="FunCoup" id="A0JP89">
    <property type="interactions" value="1070"/>
</dbReference>
<dbReference type="DNASU" id="100036634"/>
<dbReference type="GeneID" id="100036634"/>
<dbReference type="KEGG" id="xtr:100036634"/>
<dbReference type="AGR" id="Xenbase:XB-GENE-951923"/>
<dbReference type="CTD" id="55337"/>
<dbReference type="Xenbase" id="XB-GENE-951923">
    <property type="gene designation" value="shfl"/>
</dbReference>
<dbReference type="InParanoid" id="A0JP89"/>
<dbReference type="OMA" id="PVPKDKM"/>
<dbReference type="OrthoDB" id="9423182at2759"/>
<dbReference type="Proteomes" id="UP000008143">
    <property type="component" value="Chromosome 3"/>
</dbReference>
<dbReference type="Bgee" id="ENSXETG00000022042">
    <property type="expression patterns" value="Expressed in liver and 13 other cell types or tissues"/>
</dbReference>
<dbReference type="ExpressionAtlas" id="A0JP89">
    <property type="expression patterns" value="baseline"/>
</dbReference>
<dbReference type="GO" id="GO:0005737">
    <property type="term" value="C:cytoplasm"/>
    <property type="evidence" value="ECO:0000250"/>
    <property type="project" value="UniProtKB"/>
</dbReference>
<dbReference type="GO" id="GO:0005634">
    <property type="term" value="C:nucleus"/>
    <property type="evidence" value="ECO:0000250"/>
    <property type="project" value="UniProtKB"/>
</dbReference>
<dbReference type="GO" id="GO:0000932">
    <property type="term" value="C:P-body"/>
    <property type="evidence" value="ECO:0000250"/>
    <property type="project" value="UniProtKB"/>
</dbReference>
<dbReference type="GO" id="GO:0043022">
    <property type="term" value="F:ribosome binding"/>
    <property type="evidence" value="ECO:0000250"/>
    <property type="project" value="UniProtKB"/>
</dbReference>
<dbReference type="GO" id="GO:0003723">
    <property type="term" value="F:RNA binding"/>
    <property type="evidence" value="ECO:0000250"/>
    <property type="project" value="UniProtKB"/>
</dbReference>
<dbReference type="GO" id="GO:1990825">
    <property type="term" value="F:sequence-specific mRNA binding"/>
    <property type="evidence" value="ECO:0000250"/>
    <property type="project" value="UniProtKB"/>
</dbReference>
<dbReference type="GO" id="GO:2001125">
    <property type="term" value="P:negative regulation of translational frameshifting"/>
    <property type="evidence" value="ECO:0000250"/>
    <property type="project" value="UniProtKB"/>
</dbReference>
<dbReference type="GO" id="GO:0006449">
    <property type="term" value="P:regulation of translational termination"/>
    <property type="evidence" value="ECO:0000250"/>
    <property type="project" value="UniProtKB"/>
</dbReference>
<dbReference type="GO" id="GO:0035456">
    <property type="term" value="P:response to interferon-beta"/>
    <property type="evidence" value="ECO:0000250"/>
    <property type="project" value="UniProtKB"/>
</dbReference>
<dbReference type="GO" id="GO:0075523">
    <property type="term" value="P:viral translational frameshifting"/>
    <property type="evidence" value="ECO:0000250"/>
    <property type="project" value="UniProtKB"/>
</dbReference>
<dbReference type="InterPro" id="IPR026795">
    <property type="entry name" value="SHFL"/>
</dbReference>
<dbReference type="PANTHER" id="PTHR16135">
    <property type="entry name" value="REPRESSOR OF YIELD OF DENV PROTEIN"/>
    <property type="match status" value="1"/>
</dbReference>
<dbReference type="PANTHER" id="PTHR16135:SF2">
    <property type="entry name" value="SHIFTLESS ANTIVIRAL INHIBITOR OF RIBOSOMAL FRAMESHIFTING PROTEIN"/>
    <property type="match status" value="1"/>
</dbReference>
<dbReference type="Pfam" id="PF15135">
    <property type="entry name" value="UPF0515"/>
    <property type="match status" value="1"/>
</dbReference>
<gene>
    <name type="primary">shfl</name>
</gene>
<name>SHFL_XENTR</name>
<feature type="chain" id="PRO_0000318706" description="Shiftless antiviral inhibitor of ribosomal frameshifting protein homolog">
    <location>
        <begin position="1"/>
        <end position="304"/>
    </location>
</feature>
<feature type="short sequence motif" description="Nuclear localization signal" evidence="1">
    <location>
        <begin position="140"/>
        <end position="156"/>
    </location>
</feature>
<feature type="short sequence motif" description="Nuclear export signal" evidence="1">
    <location>
        <begin position="278"/>
        <end position="287"/>
    </location>
</feature>
<protein>
    <recommendedName>
        <fullName evidence="2">Shiftless antiviral inhibitor of ribosomal frameshifting protein homolog</fullName>
        <shortName>SHFL</shortName>
    </recommendedName>
    <alternativeName>
        <fullName>Repressor of yield of DENV protein homolog</fullName>
    </alternativeName>
</protein>
<accession>A0JP89</accession>
<evidence type="ECO:0000250" key="1">
    <source>
        <dbReference type="UniProtKB" id="Q9NUL5"/>
    </source>
</evidence>
<evidence type="ECO:0000305" key="2"/>
<sequence>MDGNVQEELELEKSIRRFREKFHGKVTLETAVALMRRFTNNHDQVCKYIILCMDNDTDLDVRNDLRNDPVARNVINKIKSDDQKAKEMPKDKDIKDLAKRMNTLPLTEKNLKMFNDAAENRIPSRDRQFACKECDFVWWRRVPQRKEVSRCHRCRKKFDPVPENKMWGIAEYHCPVCRRMFRGFGQIEVSSPCYVCRNPVLPSCILPPRRNQGPRTRNTHSCLAENCYNRRVPFVAGLQCAHPKSRIMNQLPKVLHPSEPHISTGSTIATCLSQGSLTENDIDDIILDDIKEEEEDEGSDDSDG</sequence>
<organism>
    <name type="scientific">Xenopus tropicalis</name>
    <name type="common">Western clawed frog</name>
    <name type="synonym">Silurana tropicalis</name>
    <dbReference type="NCBI Taxonomy" id="8364"/>
    <lineage>
        <taxon>Eukaryota</taxon>
        <taxon>Metazoa</taxon>
        <taxon>Chordata</taxon>
        <taxon>Craniata</taxon>
        <taxon>Vertebrata</taxon>
        <taxon>Euteleostomi</taxon>
        <taxon>Amphibia</taxon>
        <taxon>Batrachia</taxon>
        <taxon>Anura</taxon>
        <taxon>Pipoidea</taxon>
        <taxon>Pipidae</taxon>
        <taxon>Xenopodinae</taxon>
        <taxon>Xenopus</taxon>
        <taxon>Silurana</taxon>
    </lineage>
</organism>
<keyword id="KW-0963">Cytoplasm</keyword>
<keyword id="KW-0539">Nucleus</keyword>
<keyword id="KW-1185">Reference proteome</keyword>
<keyword id="KW-0694">RNA-binding</keyword>